<gene>
    <name type="primary">Aldh16a1</name>
</gene>
<proteinExistence type="evidence at transcript level"/>
<organism>
    <name type="scientific">Rattus norvegicus</name>
    <name type="common">Rat</name>
    <dbReference type="NCBI Taxonomy" id="10116"/>
    <lineage>
        <taxon>Eukaryota</taxon>
        <taxon>Metazoa</taxon>
        <taxon>Chordata</taxon>
        <taxon>Craniata</taxon>
        <taxon>Vertebrata</taxon>
        <taxon>Euteleostomi</taxon>
        <taxon>Mammalia</taxon>
        <taxon>Eutheria</taxon>
        <taxon>Euarchontoglires</taxon>
        <taxon>Glires</taxon>
        <taxon>Rodentia</taxon>
        <taxon>Myomorpha</taxon>
        <taxon>Muroidea</taxon>
        <taxon>Muridae</taxon>
        <taxon>Murinae</taxon>
        <taxon>Rattus</taxon>
    </lineage>
</organism>
<feature type="chain" id="PRO_0000312988" description="Aldehyde dehydrogenase family 16 member A1">
    <location>
        <begin position="1"/>
        <end position="802"/>
    </location>
</feature>
<feature type="region of interest" description="Disordered" evidence="2">
    <location>
        <begin position="513"/>
        <end position="554"/>
    </location>
</feature>
<reference key="1">
    <citation type="journal article" date="2004" name="Genome Res.">
        <title>The status, quality, and expansion of the NIH full-length cDNA project: the Mammalian Gene Collection (MGC).</title>
        <authorList>
            <consortium name="The MGC Project Team"/>
        </authorList>
    </citation>
    <scope>NUCLEOTIDE SEQUENCE [LARGE SCALE MRNA]</scope>
    <source>
        <tissue>Prostate</tissue>
    </source>
</reference>
<keyword id="KW-1185">Reference proteome</keyword>
<accession>Q3T1L0</accession>
<evidence type="ECO:0000250" key="1"/>
<evidence type="ECO:0000256" key="2">
    <source>
        <dbReference type="SAM" id="MobiDB-lite"/>
    </source>
</evidence>
<evidence type="ECO:0000305" key="3"/>
<sequence>MAATRIQPSTREIFTTLEYGPVPESHACALAWLDTHNRLLGHYVNGMWLKPEHRNPAPCQDPITGENLASCLQAEAEDISAAVEAARITFKTWSQLPGTARGQHLTRLAKVIQKHQRLLWTLESLVTGRAVREVRDGDIPLAQQLLHYHALQAHAQDSALADWEPLGVIGLILPTSFSFLDMMWRVCPALAMGCTVVALVPPSFPTPLLLAQLAGELGSFPGILNVVCGPVSLGPVLASQPGVQKVAFCGAVEEGRALRQTLAGRGATLGLALGTESLLLLTDSADVDSAVEGVVDAVWSDRSLGGLRLLIQESVWDEAMKRLQARMAQIRSGKGLDGAVDMGARGAAARDLAQSFVDEAQSQGGQVFQAGDMPSNSPFFSPTLVSGLPPAAPCAQAEVPWPVVMASPFRTVKEALALANGTPRGGSASVWSERLGQALELGYGLQVGTVWINAHGLRDPAVPTGGCKESGSSWHGGPDGLYEYLQLLGTPYRESFLCESLNYDTFGLAVSSSLPSGPETGPSPAPPYGLFVRGRFQSPGTQSSRPIKDSSGKVSSYVAEGGAKDIRGAVEAAHQAAPGWGAQSPRARASLLWALAAALERRKQVLAAQLERHGAAPTVAETEVELSVRRLQTWATRVQDQGQTLQVTGLRGPVLRLREPLGVLAVVCPDEWPMLAFVSLLAPALAHGNAVVLVPSGSCPLLALEACQDIAALFPAGLVNVVTGDRDHLTRCLALHQDVQAMWYFGSAQGSQFVEWASAGNLKPVWVNRDFPRAWDVEVQGSEQELSLHAARTKALWLPMGD</sequence>
<comment type="subunit">
    <text evidence="1">Interacts with SPG21.</text>
</comment>
<comment type="similarity">
    <text evidence="3">Belongs to the aldehyde dehydrogenase family.</text>
</comment>
<comment type="caution">
    <text evidence="3">The active site cysteine and glutamate residues are not conserved in this protein. Its activity is therefore unsure.</text>
</comment>
<name>A16A1_RAT</name>
<protein>
    <recommendedName>
        <fullName>Aldehyde dehydrogenase family 16 member A1</fullName>
    </recommendedName>
</protein>
<dbReference type="EMBL" id="BC101860">
    <property type="protein sequence ID" value="AAI01861.1"/>
    <property type="molecule type" value="mRNA"/>
</dbReference>
<dbReference type="RefSeq" id="NP_001028878.1">
    <property type="nucleotide sequence ID" value="NM_001033706.1"/>
</dbReference>
<dbReference type="SMR" id="Q3T1L0"/>
<dbReference type="FunCoup" id="Q3T1L0">
    <property type="interactions" value="403"/>
</dbReference>
<dbReference type="IntAct" id="Q3T1L0">
    <property type="interactions" value="7"/>
</dbReference>
<dbReference type="STRING" id="10116.ENSRNOP00000027992"/>
<dbReference type="GlyGen" id="Q3T1L0">
    <property type="glycosylation" value="1 site"/>
</dbReference>
<dbReference type="iPTMnet" id="Q3T1L0"/>
<dbReference type="PhosphoSitePlus" id="Q3T1L0"/>
<dbReference type="jPOST" id="Q3T1L0"/>
<dbReference type="PaxDb" id="10116-ENSRNOP00000027992"/>
<dbReference type="GeneID" id="361571"/>
<dbReference type="KEGG" id="rno:361571"/>
<dbReference type="UCSC" id="RGD:1566295">
    <property type="organism name" value="rat"/>
</dbReference>
<dbReference type="AGR" id="RGD:1566295"/>
<dbReference type="CTD" id="126133"/>
<dbReference type="RGD" id="1566295">
    <property type="gene designation" value="Aldh16a1"/>
</dbReference>
<dbReference type="VEuPathDB" id="HostDB:ENSRNOG00000020623"/>
<dbReference type="eggNOG" id="KOG2450">
    <property type="taxonomic scope" value="Eukaryota"/>
</dbReference>
<dbReference type="HOGENOM" id="CLU_018339_0_0_1"/>
<dbReference type="InParanoid" id="Q3T1L0"/>
<dbReference type="OrthoDB" id="71813at9989"/>
<dbReference type="PhylomeDB" id="Q3T1L0"/>
<dbReference type="TreeFam" id="TF329461"/>
<dbReference type="PRO" id="PR:Q3T1L0"/>
<dbReference type="Proteomes" id="UP000002494">
    <property type="component" value="Chromosome 1"/>
</dbReference>
<dbReference type="Bgee" id="ENSRNOG00000020623">
    <property type="expression patterns" value="Expressed in kidney and 19 other cell types or tissues"/>
</dbReference>
<dbReference type="ExpressionAtlas" id="Q3T1L0">
    <property type="expression patterns" value="baseline and differential"/>
</dbReference>
<dbReference type="GO" id="GO:0004029">
    <property type="term" value="F:aldehyde dehydrogenase (NAD+) activity"/>
    <property type="evidence" value="ECO:0000318"/>
    <property type="project" value="GO_Central"/>
</dbReference>
<dbReference type="Gene3D" id="3.40.605.10">
    <property type="entry name" value="Aldehyde Dehydrogenase, Chain A, domain 1"/>
    <property type="match status" value="2"/>
</dbReference>
<dbReference type="Gene3D" id="3.40.309.10">
    <property type="entry name" value="Aldehyde Dehydrogenase, Chain A, domain 2"/>
    <property type="match status" value="1"/>
</dbReference>
<dbReference type="InterPro" id="IPR016161">
    <property type="entry name" value="Ald_DH/histidinol_DH"/>
</dbReference>
<dbReference type="InterPro" id="IPR016163">
    <property type="entry name" value="Ald_DH_C"/>
</dbReference>
<dbReference type="InterPro" id="IPR016162">
    <property type="entry name" value="Ald_DH_N"/>
</dbReference>
<dbReference type="InterPro" id="IPR011408">
    <property type="entry name" value="Aldehyde_DH"/>
</dbReference>
<dbReference type="InterPro" id="IPR015590">
    <property type="entry name" value="Aldehyde_DH_dom"/>
</dbReference>
<dbReference type="PANTHER" id="PTHR11699">
    <property type="entry name" value="ALDEHYDE DEHYDROGENASE-RELATED"/>
    <property type="match status" value="1"/>
</dbReference>
<dbReference type="Pfam" id="PF00171">
    <property type="entry name" value="Aldedh"/>
    <property type="match status" value="2"/>
</dbReference>
<dbReference type="PIRSF" id="PIRSF036490">
    <property type="entry name" value="Aldedh_dupl"/>
    <property type="match status" value="1"/>
</dbReference>
<dbReference type="SUPFAM" id="SSF53720">
    <property type="entry name" value="ALDH-like"/>
    <property type="match status" value="2"/>
</dbReference>